<evidence type="ECO:0000255" key="1">
    <source>
        <dbReference type="HAMAP-Rule" id="MF_00073"/>
    </source>
</evidence>
<name>NUSB_YERPS</name>
<gene>
    <name evidence="1" type="primary">nusB</name>
    <name type="ordered locus">YPTB0936</name>
</gene>
<proteinExistence type="inferred from homology"/>
<organism>
    <name type="scientific">Yersinia pseudotuberculosis serotype I (strain IP32953)</name>
    <dbReference type="NCBI Taxonomy" id="273123"/>
    <lineage>
        <taxon>Bacteria</taxon>
        <taxon>Pseudomonadati</taxon>
        <taxon>Pseudomonadota</taxon>
        <taxon>Gammaproteobacteria</taxon>
        <taxon>Enterobacterales</taxon>
        <taxon>Yersiniaceae</taxon>
        <taxon>Yersinia</taxon>
    </lineage>
</organism>
<dbReference type="EMBL" id="BX936398">
    <property type="protein sequence ID" value="CAH20176.1"/>
    <property type="molecule type" value="Genomic_DNA"/>
</dbReference>
<dbReference type="RefSeq" id="WP_002208665.1">
    <property type="nucleotide sequence ID" value="NZ_CP009712.1"/>
</dbReference>
<dbReference type="SMR" id="Q66DV7"/>
<dbReference type="GeneID" id="96664444"/>
<dbReference type="KEGG" id="ypo:BZ17_1610"/>
<dbReference type="KEGG" id="yps:YPTB0936"/>
<dbReference type="PATRIC" id="fig|273123.14.peg.1708"/>
<dbReference type="Proteomes" id="UP000001011">
    <property type="component" value="Chromosome"/>
</dbReference>
<dbReference type="GO" id="GO:0005829">
    <property type="term" value="C:cytosol"/>
    <property type="evidence" value="ECO:0007669"/>
    <property type="project" value="TreeGrafter"/>
</dbReference>
<dbReference type="GO" id="GO:0003723">
    <property type="term" value="F:RNA binding"/>
    <property type="evidence" value="ECO:0007669"/>
    <property type="project" value="UniProtKB-UniRule"/>
</dbReference>
<dbReference type="GO" id="GO:0006353">
    <property type="term" value="P:DNA-templated transcription termination"/>
    <property type="evidence" value="ECO:0007669"/>
    <property type="project" value="UniProtKB-UniRule"/>
</dbReference>
<dbReference type="GO" id="GO:0031564">
    <property type="term" value="P:transcription antitermination"/>
    <property type="evidence" value="ECO:0007669"/>
    <property type="project" value="UniProtKB-KW"/>
</dbReference>
<dbReference type="CDD" id="cd00619">
    <property type="entry name" value="Terminator_NusB"/>
    <property type="match status" value="1"/>
</dbReference>
<dbReference type="FunFam" id="1.10.940.10:FF:000001">
    <property type="entry name" value="Transcription antitermination factor NusB"/>
    <property type="match status" value="1"/>
</dbReference>
<dbReference type="Gene3D" id="1.10.940.10">
    <property type="entry name" value="NusB-like"/>
    <property type="match status" value="1"/>
</dbReference>
<dbReference type="HAMAP" id="MF_00073">
    <property type="entry name" value="NusB"/>
    <property type="match status" value="1"/>
</dbReference>
<dbReference type="InterPro" id="IPR035926">
    <property type="entry name" value="NusB-like_sf"/>
</dbReference>
<dbReference type="InterPro" id="IPR011605">
    <property type="entry name" value="NusB_fam"/>
</dbReference>
<dbReference type="InterPro" id="IPR006027">
    <property type="entry name" value="NusB_RsmB_TIM44"/>
</dbReference>
<dbReference type="NCBIfam" id="TIGR01951">
    <property type="entry name" value="nusB"/>
    <property type="match status" value="1"/>
</dbReference>
<dbReference type="PANTHER" id="PTHR11078:SF3">
    <property type="entry name" value="ANTITERMINATION NUSB DOMAIN-CONTAINING PROTEIN"/>
    <property type="match status" value="1"/>
</dbReference>
<dbReference type="PANTHER" id="PTHR11078">
    <property type="entry name" value="N UTILIZATION SUBSTANCE PROTEIN B-RELATED"/>
    <property type="match status" value="1"/>
</dbReference>
<dbReference type="Pfam" id="PF01029">
    <property type="entry name" value="NusB"/>
    <property type="match status" value="1"/>
</dbReference>
<dbReference type="SUPFAM" id="SSF48013">
    <property type="entry name" value="NusB-like"/>
    <property type="match status" value="1"/>
</dbReference>
<sequence length="138" mass="15506">MKPAARRRARECAVQALYSWQLSKNDIADVELQFLSEQDVKDVDIAYFRELLSGVAVNAASLDALMAPFLSRQLEELGQVERAVLRIALFELSKRDDVPYKVAINEAIELAKTFGAEDSHKFVNGVLDKVAPTVRKRK</sequence>
<feature type="chain" id="PRO_0000265631" description="Transcription antitermination protein NusB">
    <location>
        <begin position="1"/>
        <end position="138"/>
    </location>
</feature>
<reference key="1">
    <citation type="journal article" date="2004" name="Proc. Natl. Acad. Sci. U.S.A.">
        <title>Insights into the evolution of Yersinia pestis through whole-genome comparison with Yersinia pseudotuberculosis.</title>
        <authorList>
            <person name="Chain P.S.G."/>
            <person name="Carniel E."/>
            <person name="Larimer F.W."/>
            <person name="Lamerdin J."/>
            <person name="Stoutland P.O."/>
            <person name="Regala W.M."/>
            <person name="Georgescu A.M."/>
            <person name="Vergez L.M."/>
            <person name="Land M.L."/>
            <person name="Motin V.L."/>
            <person name="Brubaker R.R."/>
            <person name="Fowler J."/>
            <person name="Hinnebusch J."/>
            <person name="Marceau M."/>
            <person name="Medigue C."/>
            <person name="Simonet M."/>
            <person name="Chenal-Francisque V."/>
            <person name="Souza B."/>
            <person name="Dacheux D."/>
            <person name="Elliott J.M."/>
            <person name="Derbise A."/>
            <person name="Hauser L.J."/>
            <person name="Garcia E."/>
        </authorList>
    </citation>
    <scope>NUCLEOTIDE SEQUENCE [LARGE SCALE GENOMIC DNA]</scope>
    <source>
        <strain>IP32953</strain>
    </source>
</reference>
<protein>
    <recommendedName>
        <fullName evidence="1">Transcription antitermination protein NusB</fullName>
    </recommendedName>
    <alternativeName>
        <fullName evidence="1">Antitermination factor NusB</fullName>
    </alternativeName>
</protein>
<keyword id="KW-0694">RNA-binding</keyword>
<keyword id="KW-0804">Transcription</keyword>
<keyword id="KW-0889">Transcription antitermination</keyword>
<keyword id="KW-0805">Transcription regulation</keyword>
<accession>Q66DV7</accession>
<comment type="function">
    <text evidence="1">Involved in transcription antitermination. Required for transcription of ribosomal RNA (rRNA) genes. Binds specifically to the boxA antiterminator sequence of the ribosomal RNA (rrn) operons.</text>
</comment>
<comment type="similarity">
    <text evidence="1">Belongs to the NusB family.</text>
</comment>